<organism evidence="5">
    <name type="scientific">Hypsibius exemplaris</name>
    <name type="common">Freshwater tardigrade</name>
    <dbReference type="NCBI Taxonomy" id="2072580"/>
    <lineage>
        <taxon>Eukaryota</taxon>
        <taxon>Metazoa</taxon>
        <taxon>Ecdysozoa</taxon>
        <taxon>Tardigrada</taxon>
        <taxon>Eutardigrada</taxon>
        <taxon>Parachela</taxon>
        <taxon>Hypsibioidea</taxon>
        <taxon>Hypsibiidae</taxon>
        <taxon>Hypsibius</taxon>
    </lineage>
</organism>
<accession>A0A125S9M5</accession>
<evidence type="ECO:0000255" key="1">
    <source>
        <dbReference type="PROSITE-ProRule" id="PRU01187"/>
    </source>
</evidence>
<evidence type="ECO:0000255" key="2">
    <source>
        <dbReference type="PROSITE-ProRule" id="PRU01188"/>
    </source>
</evidence>
<evidence type="ECO:0000256" key="3">
    <source>
        <dbReference type="SAM" id="MobiDB-lite"/>
    </source>
</evidence>
<evidence type="ECO:0000269" key="4">
    <source>
    </source>
</evidence>
<evidence type="ECO:0000303" key="5">
    <source>
    </source>
</evidence>
<evidence type="ECO:0000305" key="6">
    <source>
    </source>
</evidence>
<sequence>MSAQVSKKRGGSNPPKTGQHAASSTTSRTESSATSQTIYERQEVETRTQRTPGGLLLAASSAEVSSGTAGLAGSPLSRHQEKEEFKLLNNRFANYIDTIRAQQEEISVLRRKVETVSSKEVVENQKIKERYNLEIANLRRALDEVSRDLAAAIIERDSLRPERDARLLLDNEKKTLQKRSKDAEAALKDAKNQLAALRDQAKDHDNEIHGLTTENSSLKLQIENLKKDLSQETNLRVDAENRLQSEREKNALLEGIHNEEIVSLRNQRRTEITEVETRMGEEYQSKIVEQLNDLRADLEAVAHEMRLDLERSYQNQLEDSQDLANRYRDEARALLADLSAAQDRIKETQTRSEKQLQELRLQLQRLQAELNGKDDEVQRLQKLLADRQAELQNTHHELSRQIASYQELLDEKIHLDAELATYNALLRTEEERLNMKSPPFPSTPDSQRRGTKRRIADSYTRTRFRNEASATGDIHISEIDAEGQFVRLENKSGQDVVIGGWKLLMVSDNGEDNKTDYKIHSNQVIKAHSSTTIWSANTNVVHEPPADIVMEGRWLVGDHTSVTLSTSDGVEVARREMTQSSTRDDSYLGPSGLPKRSRLVVADSSDHQKNCVIM</sequence>
<reference key="1">
    <citation type="journal article" date="2016" name="Elife">
        <title>Novel origin of lamin-derived cytoplasmic intermediate filaments in tardigrades.</title>
        <authorList>
            <person name="Hering L."/>
            <person name="Bouameur J.E."/>
            <person name="Reichelt J."/>
            <person name="Magin T.M."/>
            <person name="Mayer G."/>
        </authorList>
    </citation>
    <scope>NUCLEOTIDE SEQUENCE [MRNA]</scope>
    <scope>IDENTIFICATION</scope>
    <scope>SUBCELLULAR LOCATION</scope>
    <scope>ISOPRENYLATION AT CYS-611</scope>
    <scope>DOMAIN</scope>
</reference>
<feature type="chain" id="PRO_0000440215" description="Lamin-2">
    <location>
        <begin position="1"/>
        <end position="611"/>
    </location>
</feature>
<feature type="propeptide" id="PRO_0000440216" description="Removed in mature form" evidence="6">
    <location>
        <begin position="612"/>
        <end position="614"/>
    </location>
</feature>
<feature type="domain" description="IF rod" evidence="2 6">
    <location>
        <begin position="81"/>
        <end position="433"/>
    </location>
</feature>
<feature type="domain" description="LTD" evidence="1">
    <location>
        <begin position="462"/>
        <end position="581"/>
    </location>
</feature>
<feature type="region of interest" description="Head" evidence="6">
    <location>
        <begin position="1"/>
        <end position="76"/>
    </location>
</feature>
<feature type="region of interest" description="Disordered" evidence="3">
    <location>
        <begin position="1"/>
        <end position="51"/>
    </location>
</feature>
<feature type="region of interest" description="Coil 1A" evidence="6">
    <location>
        <begin position="77"/>
        <end position="117"/>
    </location>
</feature>
<feature type="region of interest" description="Linker 1" evidence="6">
    <location>
        <begin position="118"/>
        <end position="128"/>
    </location>
</feature>
<feature type="region of interest" description="Coil 1B" evidence="6">
    <location>
        <begin position="129"/>
        <end position="268"/>
    </location>
</feature>
<feature type="region of interest" description="Linker 2" evidence="6">
    <location>
        <begin position="269"/>
        <end position="286"/>
    </location>
</feature>
<feature type="region of interest" description="Coil 2" evidence="6">
    <location>
        <begin position="287"/>
        <end position="426"/>
    </location>
</feature>
<feature type="region of interest" description="Tail" evidence="6">
    <location>
        <begin position="427"/>
        <end position="611"/>
    </location>
</feature>
<feature type="region of interest" description="Disordered" evidence="3">
    <location>
        <begin position="433"/>
        <end position="454"/>
    </location>
</feature>
<feature type="short sequence motif" description="Nuclear localization signal" evidence="6">
    <location>
        <begin position="449"/>
        <end position="458"/>
    </location>
</feature>
<feature type="compositionally biased region" description="Basic residues" evidence="3">
    <location>
        <begin position="1"/>
        <end position="10"/>
    </location>
</feature>
<feature type="compositionally biased region" description="Low complexity" evidence="3">
    <location>
        <begin position="21"/>
        <end position="37"/>
    </location>
</feature>
<feature type="lipid moiety-binding region" description="S-farnesyl cysteine" evidence="6">
    <location>
        <position position="611"/>
    </location>
</feature>
<keyword id="KW-0175">Coiled coil</keyword>
<keyword id="KW-0403">Intermediate filament</keyword>
<keyword id="KW-0449">Lipoprotein</keyword>
<keyword id="KW-0472">Membrane</keyword>
<keyword id="KW-0539">Nucleus</keyword>
<keyword id="KW-0636">Prenylation</keyword>
<protein>
    <recommendedName>
        <fullName evidence="5">Lamin-2</fullName>
    </recommendedName>
</protein>
<name>LMN2_HYPEX</name>
<proteinExistence type="evidence at protein level"/>
<comment type="function">
    <text evidence="6">Intermediate filament (IF) protein, component of the nuclear lamina, a fibrous layer on the nucleoplasmic side of the inner nuclear membrane, which is thought to provide a framework for the nuclear envelope (PubMed:26840051).</text>
</comment>
<comment type="subcellular location">
    <subcellularLocation>
        <location>Nucleus inner membrane</location>
        <topology>Lipid-anchor</topology>
        <orientation evidence="4">Nucleoplasmic side</orientation>
    </subcellularLocation>
    <text evidence="4">Localization is restricted to the nuclear periphery which is consistent with the presence of a C-terminal isoprenylation motif (PubMed:26840051).</text>
</comment>
<comment type="domain">
    <text evidence="6">Contains an alpha-helical IF rod domain organization with three coiled coil-forming segments (coil 1A, coil 1B, and coil 2) (PubMed:26840051).</text>
</comment>
<comment type="similarity">
    <text evidence="2">Belongs to the intermediate filament family.</text>
</comment>
<dbReference type="EMBL" id="KU295461">
    <property type="protein sequence ID" value="AME17871.1"/>
    <property type="molecule type" value="mRNA"/>
</dbReference>
<dbReference type="SMR" id="A0A125S9M5"/>
<dbReference type="GO" id="GO:0005882">
    <property type="term" value="C:intermediate filament"/>
    <property type="evidence" value="ECO:0007669"/>
    <property type="project" value="UniProtKB-KW"/>
</dbReference>
<dbReference type="GO" id="GO:0005637">
    <property type="term" value="C:nuclear inner membrane"/>
    <property type="evidence" value="ECO:0007669"/>
    <property type="project" value="UniProtKB-SubCell"/>
</dbReference>
<dbReference type="GO" id="GO:0005652">
    <property type="term" value="C:nuclear lamina"/>
    <property type="evidence" value="ECO:0007669"/>
    <property type="project" value="TreeGrafter"/>
</dbReference>
<dbReference type="GO" id="GO:0005200">
    <property type="term" value="F:structural constituent of cytoskeleton"/>
    <property type="evidence" value="ECO:0007669"/>
    <property type="project" value="TreeGrafter"/>
</dbReference>
<dbReference type="GO" id="GO:0031507">
    <property type="term" value="P:heterochromatin formation"/>
    <property type="evidence" value="ECO:0007669"/>
    <property type="project" value="TreeGrafter"/>
</dbReference>
<dbReference type="GO" id="GO:0006998">
    <property type="term" value="P:nuclear envelope organization"/>
    <property type="evidence" value="ECO:0007669"/>
    <property type="project" value="TreeGrafter"/>
</dbReference>
<dbReference type="GO" id="GO:0007097">
    <property type="term" value="P:nuclear migration"/>
    <property type="evidence" value="ECO:0007669"/>
    <property type="project" value="TreeGrafter"/>
</dbReference>
<dbReference type="GO" id="GO:0051664">
    <property type="term" value="P:nuclear pore localization"/>
    <property type="evidence" value="ECO:0007669"/>
    <property type="project" value="TreeGrafter"/>
</dbReference>
<dbReference type="GO" id="GO:0090435">
    <property type="term" value="P:protein localization to nuclear envelope"/>
    <property type="evidence" value="ECO:0007669"/>
    <property type="project" value="TreeGrafter"/>
</dbReference>
<dbReference type="Gene3D" id="1.20.5.170">
    <property type="match status" value="1"/>
</dbReference>
<dbReference type="Gene3D" id="2.60.40.1260">
    <property type="entry name" value="Lamin Tail domain"/>
    <property type="match status" value="1"/>
</dbReference>
<dbReference type="Gene3D" id="1.20.5.1160">
    <property type="entry name" value="Vasodilator-stimulated phosphoprotein"/>
    <property type="match status" value="1"/>
</dbReference>
<dbReference type="InterPro" id="IPR039008">
    <property type="entry name" value="IF_rod_dom"/>
</dbReference>
<dbReference type="InterPro" id="IPR001322">
    <property type="entry name" value="Lamin_tail_dom"/>
</dbReference>
<dbReference type="InterPro" id="IPR036415">
    <property type="entry name" value="Lamin_tail_dom_sf"/>
</dbReference>
<dbReference type="PANTHER" id="PTHR45721">
    <property type="entry name" value="LAMIN DM0-RELATED"/>
    <property type="match status" value="1"/>
</dbReference>
<dbReference type="PANTHER" id="PTHR45721:SF11">
    <property type="entry name" value="LAMIN DM0-RELATED"/>
    <property type="match status" value="1"/>
</dbReference>
<dbReference type="Pfam" id="PF00038">
    <property type="entry name" value="Filament"/>
    <property type="match status" value="1"/>
</dbReference>
<dbReference type="Pfam" id="PF00932">
    <property type="entry name" value="LTD"/>
    <property type="match status" value="1"/>
</dbReference>
<dbReference type="SMART" id="SM01391">
    <property type="entry name" value="Filament"/>
    <property type="match status" value="1"/>
</dbReference>
<dbReference type="SUPFAM" id="SSF64593">
    <property type="entry name" value="Intermediate filament protein, coiled coil region"/>
    <property type="match status" value="1"/>
</dbReference>
<dbReference type="SUPFAM" id="SSF74853">
    <property type="entry name" value="Lamin A/C globular tail domain"/>
    <property type="match status" value="1"/>
</dbReference>
<dbReference type="PROSITE" id="PS51842">
    <property type="entry name" value="IF_ROD_2"/>
    <property type="match status" value="1"/>
</dbReference>
<dbReference type="PROSITE" id="PS51841">
    <property type="entry name" value="LTD"/>
    <property type="match status" value="1"/>
</dbReference>